<gene>
    <name evidence="1" type="primary">truA</name>
    <name type="ordered locus">PYRAB10050</name>
    <name type="ORF">PAB1701</name>
</gene>
<sequence length="263" mass="30249">MRVAFKIAYDGTRFHGFQRQPNLRTVEGEIIKALNNSGIMYSDFKSASRTDRGVSALGNVVAITTEDEKALNPMVLNARLEDVWILSAIEVPQDFHPRFWAKSKVYRYYLPSIGLEVEKVKECSQLFLGVHDFSAFSRVDGRDTVRSIDRIEVFTLGPILIIEIEAKSFLWEMVRRIVKALELCGLGRLSCEEIKEMLEGKFEKSKKVPPAPPEGLLLVDIKYEGIEFPLNDKALKKFKREVEERFRQKIMGAYLLWDMIQLL</sequence>
<feature type="chain" id="PRO_0000057510" description="tRNA pseudouridine synthase A">
    <location>
        <begin position="1"/>
        <end position="263"/>
    </location>
</feature>
<feature type="active site" description="Nucleophile" evidence="1">
    <location>
        <position position="51"/>
    </location>
</feature>
<feature type="binding site" evidence="1">
    <location>
        <position position="106"/>
    </location>
    <ligand>
        <name>substrate</name>
    </ligand>
</feature>
<dbReference type="EC" id="5.4.99.12" evidence="1"/>
<dbReference type="EMBL" id="AJ248286">
    <property type="protein sequence ID" value="CAB49913.1"/>
    <property type="molecule type" value="Genomic_DNA"/>
</dbReference>
<dbReference type="EMBL" id="HE613800">
    <property type="protein sequence ID" value="CCE70411.1"/>
    <property type="molecule type" value="Genomic_DNA"/>
</dbReference>
<dbReference type="PIR" id="D75076">
    <property type="entry name" value="D75076"/>
</dbReference>
<dbReference type="RefSeq" id="WP_010868122.1">
    <property type="nucleotide sequence ID" value="NC_000868.1"/>
</dbReference>
<dbReference type="SMR" id="Q9UZZ3"/>
<dbReference type="STRING" id="272844.PAB1701"/>
<dbReference type="KEGG" id="pab:PAB1701"/>
<dbReference type="PATRIC" id="fig|272844.11.peg.1057"/>
<dbReference type="eggNOG" id="arCOG04449">
    <property type="taxonomic scope" value="Archaea"/>
</dbReference>
<dbReference type="HOGENOM" id="CLU_014673_4_2_2"/>
<dbReference type="OrthoDB" id="25720at2157"/>
<dbReference type="PhylomeDB" id="Q9UZZ3"/>
<dbReference type="Proteomes" id="UP000000810">
    <property type="component" value="Chromosome"/>
</dbReference>
<dbReference type="Proteomes" id="UP000009139">
    <property type="component" value="Chromosome"/>
</dbReference>
<dbReference type="GO" id="GO:0003723">
    <property type="term" value="F:RNA binding"/>
    <property type="evidence" value="ECO:0007669"/>
    <property type="project" value="InterPro"/>
</dbReference>
<dbReference type="GO" id="GO:0160147">
    <property type="term" value="F:tRNA pseudouridine(38-40) synthase activity"/>
    <property type="evidence" value="ECO:0007669"/>
    <property type="project" value="UniProtKB-EC"/>
</dbReference>
<dbReference type="GO" id="GO:0031119">
    <property type="term" value="P:tRNA pseudouridine synthesis"/>
    <property type="evidence" value="ECO:0007669"/>
    <property type="project" value="UniProtKB-UniRule"/>
</dbReference>
<dbReference type="CDD" id="cd02866">
    <property type="entry name" value="PseudoU_synth_TruA_Archea"/>
    <property type="match status" value="1"/>
</dbReference>
<dbReference type="Gene3D" id="3.30.70.660">
    <property type="entry name" value="Pseudouridine synthase I, catalytic domain, C-terminal subdomain"/>
    <property type="match status" value="1"/>
</dbReference>
<dbReference type="Gene3D" id="3.30.70.580">
    <property type="entry name" value="Pseudouridine synthase I, catalytic domain, N-terminal subdomain"/>
    <property type="match status" value="1"/>
</dbReference>
<dbReference type="HAMAP" id="MF_00171">
    <property type="entry name" value="TruA"/>
    <property type="match status" value="1"/>
</dbReference>
<dbReference type="InterPro" id="IPR020103">
    <property type="entry name" value="PsdUridine_synth_cat_dom_sf"/>
</dbReference>
<dbReference type="InterPro" id="IPR001406">
    <property type="entry name" value="PsdUridine_synth_TruA"/>
</dbReference>
<dbReference type="InterPro" id="IPR020097">
    <property type="entry name" value="PsdUridine_synth_TruA_a/b_dom"/>
</dbReference>
<dbReference type="InterPro" id="IPR020095">
    <property type="entry name" value="PsdUridine_synth_TruA_C"/>
</dbReference>
<dbReference type="InterPro" id="IPR020094">
    <property type="entry name" value="TruA/RsuA/RluB/E/F_N"/>
</dbReference>
<dbReference type="NCBIfam" id="TIGR00071">
    <property type="entry name" value="hisT_truA"/>
    <property type="match status" value="1"/>
</dbReference>
<dbReference type="PANTHER" id="PTHR11142">
    <property type="entry name" value="PSEUDOURIDYLATE SYNTHASE"/>
    <property type="match status" value="1"/>
</dbReference>
<dbReference type="PANTHER" id="PTHR11142:SF0">
    <property type="entry name" value="TRNA PSEUDOURIDINE SYNTHASE-LIKE 1"/>
    <property type="match status" value="1"/>
</dbReference>
<dbReference type="Pfam" id="PF01416">
    <property type="entry name" value="PseudoU_synth_1"/>
    <property type="match status" value="1"/>
</dbReference>
<dbReference type="PIRSF" id="PIRSF001430">
    <property type="entry name" value="tRNA_psdUrid_synth"/>
    <property type="match status" value="1"/>
</dbReference>
<dbReference type="SUPFAM" id="SSF55120">
    <property type="entry name" value="Pseudouridine synthase"/>
    <property type="match status" value="1"/>
</dbReference>
<accession>Q9UZZ3</accession>
<accession>G8ZIH0</accession>
<reference key="1">
    <citation type="journal article" date="2003" name="Mol. Microbiol.">
        <title>An integrated analysis of the genome of the hyperthermophilic archaeon Pyrococcus abyssi.</title>
        <authorList>
            <person name="Cohen G.N."/>
            <person name="Barbe V."/>
            <person name="Flament D."/>
            <person name="Galperin M."/>
            <person name="Heilig R."/>
            <person name="Lecompte O."/>
            <person name="Poch O."/>
            <person name="Prieur D."/>
            <person name="Querellou J."/>
            <person name="Ripp R."/>
            <person name="Thierry J.-C."/>
            <person name="Van der Oost J."/>
            <person name="Weissenbach J."/>
            <person name="Zivanovic Y."/>
            <person name="Forterre P."/>
        </authorList>
    </citation>
    <scope>NUCLEOTIDE SEQUENCE [LARGE SCALE GENOMIC DNA]</scope>
    <source>
        <strain>GE5 / Orsay</strain>
    </source>
</reference>
<reference key="2">
    <citation type="journal article" date="2012" name="Curr. Microbiol.">
        <title>Re-annotation of two hyperthermophilic archaea Pyrococcus abyssi GE5 and Pyrococcus furiosus DSM 3638.</title>
        <authorList>
            <person name="Gao J."/>
            <person name="Wang J."/>
        </authorList>
    </citation>
    <scope>GENOME REANNOTATION</scope>
    <source>
        <strain>GE5 / Orsay</strain>
    </source>
</reference>
<organism>
    <name type="scientific">Pyrococcus abyssi (strain GE5 / Orsay)</name>
    <dbReference type="NCBI Taxonomy" id="272844"/>
    <lineage>
        <taxon>Archaea</taxon>
        <taxon>Methanobacteriati</taxon>
        <taxon>Methanobacteriota</taxon>
        <taxon>Thermococci</taxon>
        <taxon>Thermococcales</taxon>
        <taxon>Thermococcaceae</taxon>
        <taxon>Pyrococcus</taxon>
    </lineage>
</organism>
<proteinExistence type="inferred from homology"/>
<protein>
    <recommendedName>
        <fullName evidence="1">tRNA pseudouridine synthase A</fullName>
        <ecNumber evidence="1">5.4.99.12</ecNumber>
    </recommendedName>
    <alternativeName>
        <fullName evidence="1">tRNA pseudouridine(38-40) synthase</fullName>
    </alternativeName>
    <alternativeName>
        <fullName evidence="1">tRNA pseudouridylate synthase I</fullName>
    </alternativeName>
    <alternativeName>
        <fullName evidence="1">tRNA-uridine isomerase I</fullName>
    </alternativeName>
</protein>
<name>TRUA_PYRAB</name>
<comment type="function">
    <text evidence="1">Formation of pseudouridine at positions 38, 39 and 40 in the anticodon stem and loop of transfer RNAs.</text>
</comment>
<comment type="catalytic activity">
    <reaction evidence="1">
        <text>uridine(38/39/40) in tRNA = pseudouridine(38/39/40) in tRNA</text>
        <dbReference type="Rhea" id="RHEA:22376"/>
        <dbReference type="Rhea" id="RHEA-COMP:10085"/>
        <dbReference type="Rhea" id="RHEA-COMP:10087"/>
        <dbReference type="ChEBI" id="CHEBI:65314"/>
        <dbReference type="ChEBI" id="CHEBI:65315"/>
        <dbReference type="EC" id="5.4.99.12"/>
    </reaction>
</comment>
<comment type="similarity">
    <text evidence="1">Belongs to the tRNA pseudouridine synthase TruA family.</text>
</comment>
<evidence type="ECO:0000255" key="1">
    <source>
        <dbReference type="HAMAP-Rule" id="MF_00171"/>
    </source>
</evidence>
<keyword id="KW-0413">Isomerase</keyword>
<keyword id="KW-0819">tRNA processing</keyword>